<keyword id="KW-0067">ATP-binding</keyword>
<keyword id="KW-0418">Kinase</keyword>
<keyword id="KW-0547">Nucleotide-binding</keyword>
<keyword id="KW-0808">Transferase</keyword>
<feature type="chain" id="PRO_0000291001" description="Thiamine kinase">
    <location>
        <begin position="1"/>
        <end position="274"/>
    </location>
</feature>
<organism>
    <name type="scientific">Shigella flexneri serotype 5b (strain 8401)</name>
    <dbReference type="NCBI Taxonomy" id="373384"/>
    <lineage>
        <taxon>Bacteria</taxon>
        <taxon>Pseudomonadati</taxon>
        <taxon>Pseudomonadota</taxon>
        <taxon>Gammaproteobacteria</taxon>
        <taxon>Enterobacterales</taxon>
        <taxon>Enterobacteriaceae</taxon>
        <taxon>Shigella</taxon>
    </lineage>
</organism>
<name>THIK_SHIF8</name>
<comment type="function">
    <text evidence="1">Catalyzes the ATP-dependent phosphorylation of thiamine to thiamine phosphate. Is involved in thiamine salvage.</text>
</comment>
<comment type="catalytic activity">
    <reaction evidence="1">
        <text>thiamine + ATP = thiamine phosphate + ADP + H(+)</text>
        <dbReference type="Rhea" id="RHEA:12012"/>
        <dbReference type="ChEBI" id="CHEBI:15378"/>
        <dbReference type="ChEBI" id="CHEBI:18385"/>
        <dbReference type="ChEBI" id="CHEBI:30616"/>
        <dbReference type="ChEBI" id="CHEBI:37575"/>
        <dbReference type="ChEBI" id="CHEBI:456216"/>
        <dbReference type="EC" id="2.7.1.89"/>
    </reaction>
    <physiologicalReaction direction="left-to-right" evidence="1">
        <dbReference type="Rhea" id="RHEA:12013"/>
    </physiologicalReaction>
</comment>
<comment type="pathway">
    <text evidence="1">Cofactor biosynthesis; thiamine diphosphate biosynthesis; thiamine phosphate from thiamine: step 1/1.</text>
</comment>
<comment type="similarity">
    <text evidence="1">Belongs to the thiamine kinase family.</text>
</comment>
<protein>
    <recommendedName>
        <fullName evidence="1">Thiamine kinase</fullName>
        <ecNumber evidence="1">2.7.1.89</ecNumber>
    </recommendedName>
</protein>
<sequence length="274" mass="32351">MPFRSNNPITRDELLSRFFPQFHPVTTFNSGLSGGSFLIEHQGQRFVVRQPHDPDAPQSAFLRQYRALSQLPASIAPKPHLYLRDWMVVDYLPGAVKTYLPDTNELAGLLYYLHQQPRFGWRITLLPLLELYWQQSDPARRTVGWLRMLKRLRKAREPRPLRLSPLHMDVHAGNLVHSASGLKLIDWEYAGDGDIALELAAVWVENTEQHRQLVNDYATRAKIYPAQLWRQVRRWFPWLLMLKGGWFEYRWRQTGDQQFIRLADDTWRQLLIKQ</sequence>
<dbReference type="EC" id="2.7.1.89" evidence="1"/>
<dbReference type="EMBL" id="CP000266">
    <property type="protein sequence ID" value="ABF03335.1"/>
    <property type="molecule type" value="Genomic_DNA"/>
</dbReference>
<dbReference type="RefSeq" id="WP_001116580.1">
    <property type="nucleotide sequence ID" value="NC_008258.1"/>
</dbReference>
<dbReference type="SMR" id="Q0T5T0"/>
<dbReference type="KEGG" id="sfv:SFV_1126"/>
<dbReference type="HOGENOM" id="CLU_055115_2_1_6"/>
<dbReference type="UniPathway" id="UPA00060">
    <property type="reaction ID" value="UER00596"/>
</dbReference>
<dbReference type="Proteomes" id="UP000000659">
    <property type="component" value="Chromosome"/>
</dbReference>
<dbReference type="GO" id="GO:0005524">
    <property type="term" value="F:ATP binding"/>
    <property type="evidence" value="ECO:0007669"/>
    <property type="project" value="UniProtKB-KW"/>
</dbReference>
<dbReference type="GO" id="GO:0019165">
    <property type="term" value="F:thiamine kinase activity"/>
    <property type="evidence" value="ECO:0007669"/>
    <property type="project" value="UniProtKB-UniRule"/>
</dbReference>
<dbReference type="GO" id="GO:0009229">
    <property type="term" value="P:thiamine diphosphate biosynthetic process"/>
    <property type="evidence" value="ECO:0007669"/>
    <property type="project" value="UniProtKB-UniRule"/>
</dbReference>
<dbReference type="GO" id="GO:0006772">
    <property type="term" value="P:thiamine metabolic process"/>
    <property type="evidence" value="ECO:0007669"/>
    <property type="project" value="InterPro"/>
</dbReference>
<dbReference type="FunFam" id="3.90.1200.10:FF:000004">
    <property type="entry name" value="Thiamine kinase"/>
    <property type="match status" value="1"/>
</dbReference>
<dbReference type="Gene3D" id="3.90.1200.10">
    <property type="match status" value="1"/>
</dbReference>
<dbReference type="HAMAP" id="MF_01604">
    <property type="entry name" value="Thiamine_kinase"/>
    <property type="match status" value="1"/>
</dbReference>
<dbReference type="InterPro" id="IPR002575">
    <property type="entry name" value="Aminoglycoside_PTrfase"/>
</dbReference>
<dbReference type="InterPro" id="IPR011009">
    <property type="entry name" value="Kinase-like_dom_sf"/>
</dbReference>
<dbReference type="InterPro" id="IPR014093">
    <property type="entry name" value="Thiamine_kinase"/>
</dbReference>
<dbReference type="NCBIfam" id="NF007620">
    <property type="entry name" value="PRK10271.1"/>
    <property type="match status" value="1"/>
</dbReference>
<dbReference type="NCBIfam" id="TIGR02721">
    <property type="entry name" value="ycfN_thiK"/>
    <property type="match status" value="1"/>
</dbReference>
<dbReference type="Pfam" id="PF01636">
    <property type="entry name" value="APH"/>
    <property type="match status" value="1"/>
</dbReference>
<dbReference type="SUPFAM" id="SSF56112">
    <property type="entry name" value="Protein kinase-like (PK-like)"/>
    <property type="match status" value="1"/>
</dbReference>
<evidence type="ECO:0000255" key="1">
    <source>
        <dbReference type="HAMAP-Rule" id="MF_01604"/>
    </source>
</evidence>
<accession>Q0T5T0</accession>
<proteinExistence type="inferred from homology"/>
<reference key="1">
    <citation type="journal article" date="2006" name="BMC Genomics">
        <title>Complete genome sequence of Shigella flexneri 5b and comparison with Shigella flexneri 2a.</title>
        <authorList>
            <person name="Nie H."/>
            <person name="Yang F."/>
            <person name="Zhang X."/>
            <person name="Yang J."/>
            <person name="Chen L."/>
            <person name="Wang J."/>
            <person name="Xiong Z."/>
            <person name="Peng J."/>
            <person name="Sun L."/>
            <person name="Dong J."/>
            <person name="Xue Y."/>
            <person name="Xu X."/>
            <person name="Chen S."/>
            <person name="Yao Z."/>
            <person name="Shen Y."/>
            <person name="Jin Q."/>
        </authorList>
    </citation>
    <scope>NUCLEOTIDE SEQUENCE [LARGE SCALE GENOMIC DNA]</scope>
    <source>
        <strain>8401</strain>
    </source>
</reference>
<gene>
    <name evidence="1" type="primary">thiK</name>
    <name type="ordered locus">SFV_1126</name>
</gene>